<sequence length="112" mass="12328">MNFDMSKLMQQAQKMQEQMKKAQQERENMEVIGESGAGLVTVTMTGKYDVKSVSIDNSLMSEDKEILEDLIAAAVNSAVKKVEENSTASSDIYKMAKDAGIDLPSGINFPFK</sequence>
<keyword id="KW-0963">Cytoplasm</keyword>
<keyword id="KW-0238">DNA-binding</keyword>
<keyword id="KW-1185">Reference proteome</keyword>
<reference key="1">
    <citation type="journal article" date="2005" name="Nat. Genet.">
        <title>The complete genome sequence of Francisella tularensis, the causative agent of tularemia.</title>
        <authorList>
            <person name="Larsson P."/>
            <person name="Oyston P.C.F."/>
            <person name="Chain P."/>
            <person name="Chu M.C."/>
            <person name="Duffield M."/>
            <person name="Fuxelius H.-H."/>
            <person name="Garcia E."/>
            <person name="Haelltorp G."/>
            <person name="Johansson D."/>
            <person name="Isherwood K.E."/>
            <person name="Karp P.D."/>
            <person name="Larsson E."/>
            <person name="Liu Y."/>
            <person name="Michell S."/>
            <person name="Prior J."/>
            <person name="Prior R."/>
            <person name="Malfatti S."/>
            <person name="Sjoestedt A."/>
            <person name="Svensson K."/>
            <person name="Thompson N."/>
            <person name="Vergez L."/>
            <person name="Wagg J.K."/>
            <person name="Wren B.W."/>
            <person name="Lindler L.E."/>
            <person name="Andersson S.G.E."/>
            <person name="Forsman M."/>
            <person name="Titball R.W."/>
        </authorList>
    </citation>
    <scope>NUCLEOTIDE SEQUENCE [LARGE SCALE GENOMIC DNA]</scope>
    <source>
        <strain>SCHU S4 / Schu 4</strain>
    </source>
</reference>
<organism>
    <name type="scientific">Francisella tularensis subsp. tularensis (strain SCHU S4 / Schu 4)</name>
    <dbReference type="NCBI Taxonomy" id="177416"/>
    <lineage>
        <taxon>Bacteria</taxon>
        <taxon>Pseudomonadati</taxon>
        <taxon>Pseudomonadota</taxon>
        <taxon>Gammaproteobacteria</taxon>
        <taxon>Thiotrichales</taxon>
        <taxon>Francisellaceae</taxon>
        <taxon>Francisella</taxon>
    </lineage>
</organism>
<protein>
    <recommendedName>
        <fullName evidence="1">Nucleoid-associated protein FTT_0810c</fullName>
    </recommendedName>
</protein>
<gene>
    <name type="ordered locus">FTT_0810c</name>
</gene>
<evidence type="ECO:0000255" key="1">
    <source>
        <dbReference type="HAMAP-Rule" id="MF_00274"/>
    </source>
</evidence>
<evidence type="ECO:0000256" key="2">
    <source>
        <dbReference type="SAM" id="MobiDB-lite"/>
    </source>
</evidence>
<comment type="function">
    <text evidence="1">Binds to DNA and alters its conformation. May be involved in regulation of gene expression, nucleoid organization and DNA protection.</text>
</comment>
<comment type="subunit">
    <text evidence="1">Homodimer.</text>
</comment>
<comment type="subcellular location">
    <subcellularLocation>
        <location evidence="1">Cytoplasm</location>
        <location evidence="1">Nucleoid</location>
    </subcellularLocation>
</comment>
<comment type="similarity">
    <text evidence="1">Belongs to the YbaB/EbfC family.</text>
</comment>
<proteinExistence type="inferred from homology"/>
<name>Y810_FRATT</name>
<accession>Q5NGM5</accession>
<feature type="chain" id="PRO_1000071918" description="Nucleoid-associated protein FTT_0810c">
    <location>
        <begin position="1"/>
        <end position="112"/>
    </location>
</feature>
<feature type="region of interest" description="Disordered" evidence="2">
    <location>
        <begin position="1"/>
        <end position="27"/>
    </location>
</feature>
<feature type="compositionally biased region" description="Basic and acidic residues" evidence="2">
    <location>
        <begin position="17"/>
        <end position="27"/>
    </location>
</feature>
<dbReference type="EMBL" id="AJ749949">
    <property type="protein sequence ID" value="CAG45443.1"/>
    <property type="molecule type" value="Genomic_DNA"/>
</dbReference>
<dbReference type="RefSeq" id="WP_003029310.1">
    <property type="nucleotide sequence ID" value="NC_006570.2"/>
</dbReference>
<dbReference type="RefSeq" id="YP_169817.1">
    <property type="nucleotide sequence ID" value="NC_006570.2"/>
</dbReference>
<dbReference type="SMR" id="Q5NGM5"/>
<dbReference type="IntAct" id="Q5NGM5">
    <property type="interactions" value="2"/>
</dbReference>
<dbReference type="STRING" id="177416.FTT_0810c"/>
<dbReference type="DNASU" id="3192128"/>
<dbReference type="EnsemblBacteria" id="CAG45443">
    <property type="protein sequence ID" value="CAG45443"/>
    <property type="gene ID" value="FTT_0810c"/>
</dbReference>
<dbReference type="KEGG" id="ftu:FTT_0810c"/>
<dbReference type="eggNOG" id="COG0718">
    <property type="taxonomic scope" value="Bacteria"/>
</dbReference>
<dbReference type="OrthoDB" id="9808738at2"/>
<dbReference type="Proteomes" id="UP000001174">
    <property type="component" value="Chromosome"/>
</dbReference>
<dbReference type="GO" id="GO:0043590">
    <property type="term" value="C:bacterial nucleoid"/>
    <property type="evidence" value="ECO:0007669"/>
    <property type="project" value="UniProtKB-UniRule"/>
</dbReference>
<dbReference type="GO" id="GO:0005829">
    <property type="term" value="C:cytosol"/>
    <property type="evidence" value="ECO:0007669"/>
    <property type="project" value="TreeGrafter"/>
</dbReference>
<dbReference type="GO" id="GO:0003677">
    <property type="term" value="F:DNA binding"/>
    <property type="evidence" value="ECO:0007669"/>
    <property type="project" value="UniProtKB-UniRule"/>
</dbReference>
<dbReference type="Gene3D" id="3.30.1310.10">
    <property type="entry name" value="Nucleoid-associated protein YbaB-like domain"/>
    <property type="match status" value="1"/>
</dbReference>
<dbReference type="HAMAP" id="MF_00274">
    <property type="entry name" value="DNA_YbaB_EbfC"/>
    <property type="match status" value="1"/>
</dbReference>
<dbReference type="InterPro" id="IPR036894">
    <property type="entry name" value="YbaB-like_sf"/>
</dbReference>
<dbReference type="InterPro" id="IPR004401">
    <property type="entry name" value="YbaB/EbfC"/>
</dbReference>
<dbReference type="NCBIfam" id="TIGR00103">
    <property type="entry name" value="DNA_YbaB_EbfC"/>
    <property type="match status" value="1"/>
</dbReference>
<dbReference type="PANTHER" id="PTHR33449">
    <property type="entry name" value="NUCLEOID-ASSOCIATED PROTEIN YBAB"/>
    <property type="match status" value="1"/>
</dbReference>
<dbReference type="PANTHER" id="PTHR33449:SF1">
    <property type="entry name" value="NUCLEOID-ASSOCIATED PROTEIN YBAB"/>
    <property type="match status" value="1"/>
</dbReference>
<dbReference type="Pfam" id="PF02575">
    <property type="entry name" value="YbaB_DNA_bd"/>
    <property type="match status" value="1"/>
</dbReference>
<dbReference type="PIRSF" id="PIRSF004555">
    <property type="entry name" value="UCP004555"/>
    <property type="match status" value="1"/>
</dbReference>
<dbReference type="SUPFAM" id="SSF82607">
    <property type="entry name" value="YbaB-like"/>
    <property type="match status" value="1"/>
</dbReference>